<feature type="chain" id="PRO_1000092971" description="Peptidyl-tRNA hydrolase">
    <location>
        <begin position="1"/>
        <end position="194"/>
    </location>
</feature>
<feature type="active site" description="Proton acceptor" evidence="1">
    <location>
        <position position="22"/>
    </location>
</feature>
<feature type="binding site" evidence="1">
    <location>
        <position position="17"/>
    </location>
    <ligand>
        <name>tRNA</name>
        <dbReference type="ChEBI" id="CHEBI:17843"/>
    </ligand>
</feature>
<feature type="binding site" evidence="1">
    <location>
        <position position="68"/>
    </location>
    <ligand>
        <name>tRNA</name>
        <dbReference type="ChEBI" id="CHEBI:17843"/>
    </ligand>
</feature>
<feature type="binding site" evidence="1">
    <location>
        <position position="70"/>
    </location>
    <ligand>
        <name>tRNA</name>
        <dbReference type="ChEBI" id="CHEBI:17843"/>
    </ligand>
</feature>
<feature type="binding site" evidence="1">
    <location>
        <position position="116"/>
    </location>
    <ligand>
        <name>tRNA</name>
        <dbReference type="ChEBI" id="CHEBI:17843"/>
    </ligand>
</feature>
<feature type="site" description="Discriminates between blocked and unblocked aminoacyl-tRNA" evidence="1">
    <location>
        <position position="12"/>
    </location>
</feature>
<feature type="site" description="Stabilizes the basic form of H active site to accept a proton" evidence="1">
    <location>
        <position position="95"/>
    </location>
</feature>
<gene>
    <name evidence="1" type="primary">pth</name>
    <name type="ordered locus">PMI1081</name>
</gene>
<comment type="function">
    <text evidence="1">Hydrolyzes ribosome-free peptidyl-tRNAs (with 1 or more amino acids incorporated), which drop off the ribosome during protein synthesis, or as a result of ribosome stalling.</text>
</comment>
<comment type="function">
    <text evidence="1">Catalyzes the release of premature peptidyl moieties from peptidyl-tRNA molecules trapped in stalled 50S ribosomal subunits, and thus maintains levels of free tRNAs and 50S ribosomes.</text>
</comment>
<comment type="catalytic activity">
    <reaction evidence="1">
        <text>an N-acyl-L-alpha-aminoacyl-tRNA + H2O = an N-acyl-L-amino acid + a tRNA + H(+)</text>
        <dbReference type="Rhea" id="RHEA:54448"/>
        <dbReference type="Rhea" id="RHEA-COMP:10123"/>
        <dbReference type="Rhea" id="RHEA-COMP:13883"/>
        <dbReference type="ChEBI" id="CHEBI:15377"/>
        <dbReference type="ChEBI" id="CHEBI:15378"/>
        <dbReference type="ChEBI" id="CHEBI:59874"/>
        <dbReference type="ChEBI" id="CHEBI:78442"/>
        <dbReference type="ChEBI" id="CHEBI:138191"/>
        <dbReference type="EC" id="3.1.1.29"/>
    </reaction>
</comment>
<comment type="subunit">
    <text evidence="1">Monomer.</text>
</comment>
<comment type="subcellular location">
    <subcellularLocation>
        <location evidence="1">Cytoplasm</location>
    </subcellularLocation>
</comment>
<comment type="similarity">
    <text evidence="1">Belongs to the PTH family.</text>
</comment>
<name>PTH_PROMH</name>
<dbReference type="EC" id="3.1.1.29" evidence="1"/>
<dbReference type="EMBL" id="AM942759">
    <property type="protein sequence ID" value="CAR42332.1"/>
    <property type="molecule type" value="Genomic_DNA"/>
</dbReference>
<dbReference type="RefSeq" id="WP_004242660.1">
    <property type="nucleotide sequence ID" value="NC_010554.1"/>
</dbReference>
<dbReference type="SMR" id="B4EVR1"/>
<dbReference type="EnsemblBacteria" id="CAR42332">
    <property type="protein sequence ID" value="CAR42332"/>
    <property type="gene ID" value="PMI1081"/>
</dbReference>
<dbReference type="GeneID" id="6801314"/>
<dbReference type="KEGG" id="pmr:PMI1081"/>
<dbReference type="eggNOG" id="COG0193">
    <property type="taxonomic scope" value="Bacteria"/>
</dbReference>
<dbReference type="HOGENOM" id="CLU_062456_3_1_6"/>
<dbReference type="Proteomes" id="UP000008319">
    <property type="component" value="Chromosome"/>
</dbReference>
<dbReference type="GO" id="GO:0005737">
    <property type="term" value="C:cytoplasm"/>
    <property type="evidence" value="ECO:0007669"/>
    <property type="project" value="UniProtKB-SubCell"/>
</dbReference>
<dbReference type="GO" id="GO:0004045">
    <property type="term" value="F:peptidyl-tRNA hydrolase activity"/>
    <property type="evidence" value="ECO:0007669"/>
    <property type="project" value="UniProtKB-UniRule"/>
</dbReference>
<dbReference type="GO" id="GO:0000049">
    <property type="term" value="F:tRNA binding"/>
    <property type="evidence" value="ECO:0007669"/>
    <property type="project" value="UniProtKB-UniRule"/>
</dbReference>
<dbReference type="GO" id="GO:0006515">
    <property type="term" value="P:protein quality control for misfolded or incompletely synthesized proteins"/>
    <property type="evidence" value="ECO:0007669"/>
    <property type="project" value="UniProtKB-UniRule"/>
</dbReference>
<dbReference type="GO" id="GO:0072344">
    <property type="term" value="P:rescue of stalled ribosome"/>
    <property type="evidence" value="ECO:0007669"/>
    <property type="project" value="UniProtKB-UniRule"/>
</dbReference>
<dbReference type="CDD" id="cd00462">
    <property type="entry name" value="PTH"/>
    <property type="match status" value="1"/>
</dbReference>
<dbReference type="FunFam" id="3.40.50.1470:FF:000001">
    <property type="entry name" value="Peptidyl-tRNA hydrolase"/>
    <property type="match status" value="1"/>
</dbReference>
<dbReference type="Gene3D" id="3.40.50.1470">
    <property type="entry name" value="Peptidyl-tRNA hydrolase"/>
    <property type="match status" value="1"/>
</dbReference>
<dbReference type="HAMAP" id="MF_00083">
    <property type="entry name" value="Pept_tRNA_hydro_bact"/>
    <property type="match status" value="1"/>
</dbReference>
<dbReference type="InterPro" id="IPR001328">
    <property type="entry name" value="Pept_tRNA_hydro"/>
</dbReference>
<dbReference type="InterPro" id="IPR018171">
    <property type="entry name" value="Pept_tRNA_hydro_CS"/>
</dbReference>
<dbReference type="InterPro" id="IPR036416">
    <property type="entry name" value="Pept_tRNA_hydro_sf"/>
</dbReference>
<dbReference type="NCBIfam" id="TIGR00447">
    <property type="entry name" value="pth"/>
    <property type="match status" value="1"/>
</dbReference>
<dbReference type="PANTHER" id="PTHR17224">
    <property type="entry name" value="PEPTIDYL-TRNA HYDROLASE"/>
    <property type="match status" value="1"/>
</dbReference>
<dbReference type="PANTHER" id="PTHR17224:SF1">
    <property type="entry name" value="PEPTIDYL-TRNA HYDROLASE"/>
    <property type="match status" value="1"/>
</dbReference>
<dbReference type="Pfam" id="PF01195">
    <property type="entry name" value="Pept_tRNA_hydro"/>
    <property type="match status" value="1"/>
</dbReference>
<dbReference type="SUPFAM" id="SSF53178">
    <property type="entry name" value="Peptidyl-tRNA hydrolase-like"/>
    <property type="match status" value="1"/>
</dbReference>
<dbReference type="PROSITE" id="PS01195">
    <property type="entry name" value="PEPT_TRNA_HYDROL_1"/>
    <property type="match status" value="1"/>
</dbReference>
<dbReference type="PROSITE" id="PS01196">
    <property type="entry name" value="PEPT_TRNA_HYDROL_2"/>
    <property type="match status" value="1"/>
</dbReference>
<evidence type="ECO:0000255" key="1">
    <source>
        <dbReference type="HAMAP-Rule" id="MF_00083"/>
    </source>
</evidence>
<proteinExistence type="inferred from homology"/>
<keyword id="KW-0963">Cytoplasm</keyword>
<keyword id="KW-0378">Hydrolase</keyword>
<keyword id="KW-1185">Reference proteome</keyword>
<keyword id="KW-0694">RNA-binding</keyword>
<keyword id="KW-0820">tRNA-binding</keyword>
<protein>
    <recommendedName>
        <fullName evidence="1">Peptidyl-tRNA hydrolase</fullName>
        <shortName evidence="1">Pth</shortName>
        <ecNumber evidence="1">3.1.1.29</ecNumber>
    </recommendedName>
</protein>
<sequence>MSKIKLIVGLANPGADYAQTRHNAGAWYVDLLAQRHQQSLKEESKFFGYTARINLNGNDVRLLVPTTFMNLSGKAVLAMANFYRIQPDEILVAHDELDLPPGVVKMKLGGGNGGHNGLKDIQSKFSNNPNFYRLRIGIGHPGDKNKVVGFVLGKPPTSEQKLIDDAIDEALACTDILMRDGYEKAINRLHSFKA</sequence>
<accession>B4EVR1</accession>
<reference key="1">
    <citation type="journal article" date="2008" name="J. Bacteriol.">
        <title>Complete genome sequence of uropathogenic Proteus mirabilis, a master of both adherence and motility.</title>
        <authorList>
            <person name="Pearson M.M."/>
            <person name="Sebaihia M."/>
            <person name="Churcher C."/>
            <person name="Quail M.A."/>
            <person name="Seshasayee A.S."/>
            <person name="Luscombe N.M."/>
            <person name="Abdellah Z."/>
            <person name="Arrosmith C."/>
            <person name="Atkin B."/>
            <person name="Chillingworth T."/>
            <person name="Hauser H."/>
            <person name="Jagels K."/>
            <person name="Moule S."/>
            <person name="Mungall K."/>
            <person name="Norbertczak H."/>
            <person name="Rabbinowitsch E."/>
            <person name="Walker D."/>
            <person name="Whithead S."/>
            <person name="Thomson N.R."/>
            <person name="Rather P.N."/>
            <person name="Parkhill J."/>
            <person name="Mobley H.L.T."/>
        </authorList>
    </citation>
    <scope>NUCLEOTIDE SEQUENCE [LARGE SCALE GENOMIC DNA]</scope>
    <source>
        <strain>HI4320</strain>
    </source>
</reference>
<organism>
    <name type="scientific">Proteus mirabilis (strain HI4320)</name>
    <dbReference type="NCBI Taxonomy" id="529507"/>
    <lineage>
        <taxon>Bacteria</taxon>
        <taxon>Pseudomonadati</taxon>
        <taxon>Pseudomonadota</taxon>
        <taxon>Gammaproteobacteria</taxon>
        <taxon>Enterobacterales</taxon>
        <taxon>Morganellaceae</taxon>
        <taxon>Proteus</taxon>
    </lineage>
</organism>